<dbReference type="EMBL" id="CP000425">
    <property type="protein sequence ID" value="ABJ71731.1"/>
    <property type="molecule type" value="Genomic_DNA"/>
</dbReference>
<dbReference type="RefSeq" id="WP_011675168.1">
    <property type="nucleotide sequence ID" value="NC_008527.1"/>
</dbReference>
<dbReference type="SMR" id="Q032Z1"/>
<dbReference type="KEGG" id="llc:LACR_0106"/>
<dbReference type="HOGENOM" id="CLU_140930_1_1_9"/>
<dbReference type="Proteomes" id="UP000000240">
    <property type="component" value="Chromosome"/>
</dbReference>
<dbReference type="GO" id="GO:0043590">
    <property type="term" value="C:bacterial nucleoid"/>
    <property type="evidence" value="ECO:0007669"/>
    <property type="project" value="UniProtKB-UniRule"/>
</dbReference>
<dbReference type="GO" id="GO:0005829">
    <property type="term" value="C:cytosol"/>
    <property type="evidence" value="ECO:0007669"/>
    <property type="project" value="TreeGrafter"/>
</dbReference>
<dbReference type="GO" id="GO:0003677">
    <property type="term" value="F:DNA binding"/>
    <property type="evidence" value="ECO:0007669"/>
    <property type="project" value="UniProtKB-UniRule"/>
</dbReference>
<dbReference type="Gene3D" id="3.30.1310.10">
    <property type="entry name" value="Nucleoid-associated protein YbaB-like domain"/>
    <property type="match status" value="1"/>
</dbReference>
<dbReference type="HAMAP" id="MF_00274">
    <property type="entry name" value="DNA_YbaB_EbfC"/>
    <property type="match status" value="1"/>
</dbReference>
<dbReference type="InterPro" id="IPR036894">
    <property type="entry name" value="YbaB-like_sf"/>
</dbReference>
<dbReference type="InterPro" id="IPR004401">
    <property type="entry name" value="YbaB/EbfC"/>
</dbReference>
<dbReference type="NCBIfam" id="TIGR00103">
    <property type="entry name" value="DNA_YbaB_EbfC"/>
    <property type="match status" value="1"/>
</dbReference>
<dbReference type="PANTHER" id="PTHR33449">
    <property type="entry name" value="NUCLEOID-ASSOCIATED PROTEIN YBAB"/>
    <property type="match status" value="1"/>
</dbReference>
<dbReference type="PANTHER" id="PTHR33449:SF1">
    <property type="entry name" value="NUCLEOID-ASSOCIATED PROTEIN YBAB"/>
    <property type="match status" value="1"/>
</dbReference>
<dbReference type="Pfam" id="PF02575">
    <property type="entry name" value="YbaB_DNA_bd"/>
    <property type="match status" value="1"/>
</dbReference>
<dbReference type="PIRSF" id="PIRSF004555">
    <property type="entry name" value="UCP004555"/>
    <property type="match status" value="1"/>
</dbReference>
<dbReference type="SUPFAM" id="SSF82607">
    <property type="entry name" value="YbaB-like"/>
    <property type="match status" value="1"/>
</dbReference>
<gene>
    <name type="ordered locus">LACR_0106</name>
</gene>
<evidence type="ECO:0000255" key="1">
    <source>
        <dbReference type="HAMAP-Rule" id="MF_00274"/>
    </source>
</evidence>
<comment type="function">
    <text evidence="1">Binds to DNA and alters its conformation. May be involved in regulation of gene expression, nucleoid organization and DNA protection.</text>
</comment>
<comment type="subunit">
    <text evidence="1">Homodimer.</text>
</comment>
<comment type="subcellular location">
    <subcellularLocation>
        <location evidence="1">Cytoplasm</location>
        <location evidence="1">Nucleoid</location>
    </subcellularLocation>
</comment>
<comment type="similarity">
    <text evidence="1">Belongs to the YbaB/EbfC family.</text>
</comment>
<feature type="chain" id="PRO_1000003758" description="Nucleoid-associated protein LACR_0106">
    <location>
        <begin position="1"/>
        <end position="99"/>
    </location>
</feature>
<sequence length="99" mass="11094">MMNMQSMMKQAQKLQKQMQVSQEEIANTTFVGKSAQDLVTVEFSGDRTLKSLNINPDVIDPEDPETLQDMVTDAVNDALSQIEKVTEQKLGKFTKGLPF</sequence>
<protein>
    <recommendedName>
        <fullName evidence="1">Nucleoid-associated protein LACR_0106</fullName>
    </recommendedName>
</protein>
<reference key="1">
    <citation type="journal article" date="2006" name="Proc. Natl. Acad. Sci. U.S.A.">
        <title>Comparative genomics of the lactic acid bacteria.</title>
        <authorList>
            <person name="Makarova K.S."/>
            <person name="Slesarev A."/>
            <person name="Wolf Y.I."/>
            <person name="Sorokin A."/>
            <person name="Mirkin B."/>
            <person name="Koonin E.V."/>
            <person name="Pavlov A."/>
            <person name="Pavlova N."/>
            <person name="Karamychev V."/>
            <person name="Polouchine N."/>
            <person name="Shakhova V."/>
            <person name="Grigoriev I."/>
            <person name="Lou Y."/>
            <person name="Rohksar D."/>
            <person name="Lucas S."/>
            <person name="Huang K."/>
            <person name="Goodstein D.M."/>
            <person name="Hawkins T."/>
            <person name="Plengvidhya V."/>
            <person name="Welker D."/>
            <person name="Hughes J."/>
            <person name="Goh Y."/>
            <person name="Benson A."/>
            <person name="Baldwin K."/>
            <person name="Lee J.-H."/>
            <person name="Diaz-Muniz I."/>
            <person name="Dosti B."/>
            <person name="Smeianov V."/>
            <person name="Wechter W."/>
            <person name="Barabote R."/>
            <person name="Lorca G."/>
            <person name="Altermann E."/>
            <person name="Barrangou R."/>
            <person name="Ganesan B."/>
            <person name="Xie Y."/>
            <person name="Rawsthorne H."/>
            <person name="Tamir D."/>
            <person name="Parker C."/>
            <person name="Breidt F."/>
            <person name="Broadbent J.R."/>
            <person name="Hutkins R."/>
            <person name="O'Sullivan D."/>
            <person name="Steele J."/>
            <person name="Unlu G."/>
            <person name="Saier M.H. Jr."/>
            <person name="Klaenhammer T."/>
            <person name="Richardson P."/>
            <person name="Kozyavkin S."/>
            <person name="Weimer B.C."/>
            <person name="Mills D.A."/>
        </authorList>
    </citation>
    <scope>NUCLEOTIDE SEQUENCE [LARGE SCALE GENOMIC DNA]</scope>
    <source>
        <strain>SK11</strain>
    </source>
</reference>
<name>Y106_LACLS</name>
<keyword id="KW-0963">Cytoplasm</keyword>
<keyword id="KW-0238">DNA-binding</keyword>
<organism>
    <name type="scientific">Lactococcus lactis subsp. cremoris (strain SK11)</name>
    <dbReference type="NCBI Taxonomy" id="272622"/>
    <lineage>
        <taxon>Bacteria</taxon>
        <taxon>Bacillati</taxon>
        <taxon>Bacillota</taxon>
        <taxon>Bacilli</taxon>
        <taxon>Lactobacillales</taxon>
        <taxon>Streptococcaceae</taxon>
        <taxon>Lactococcus</taxon>
        <taxon>Lactococcus cremoris subsp. cremoris</taxon>
    </lineage>
</organism>
<accession>Q032Z1</accession>
<proteinExistence type="inferred from homology"/>